<organism>
    <name type="scientific">Salmonella choleraesuis (strain SC-B67)</name>
    <dbReference type="NCBI Taxonomy" id="321314"/>
    <lineage>
        <taxon>Bacteria</taxon>
        <taxon>Pseudomonadati</taxon>
        <taxon>Pseudomonadota</taxon>
        <taxon>Gammaproteobacteria</taxon>
        <taxon>Enterobacterales</taxon>
        <taxon>Enterobacteriaceae</taxon>
        <taxon>Salmonella</taxon>
    </lineage>
</organism>
<comment type="function">
    <text evidence="1">Involved in DNA repair and RecF pathway recombination.</text>
</comment>
<comment type="subunit">
    <text evidence="1">Monomer.</text>
</comment>
<comment type="similarity">
    <text evidence="1">Belongs to the RecO family.</text>
</comment>
<evidence type="ECO:0000255" key="1">
    <source>
        <dbReference type="HAMAP-Rule" id="MF_00201"/>
    </source>
</evidence>
<accession>Q57LD2</accession>
<keyword id="KW-0227">DNA damage</keyword>
<keyword id="KW-0233">DNA recombination</keyword>
<keyword id="KW-0234">DNA repair</keyword>
<feature type="chain" id="PRO_0000227052" description="DNA repair protein RecO">
    <location>
        <begin position="1"/>
        <end position="242"/>
    </location>
</feature>
<name>RECO_SALCH</name>
<gene>
    <name evidence="1" type="primary">recO</name>
    <name type="ordered locus">SCH_2574</name>
</gene>
<reference key="1">
    <citation type="journal article" date="2005" name="Nucleic Acids Res.">
        <title>The genome sequence of Salmonella enterica serovar Choleraesuis, a highly invasive and resistant zoonotic pathogen.</title>
        <authorList>
            <person name="Chiu C.-H."/>
            <person name="Tang P."/>
            <person name="Chu C."/>
            <person name="Hu S."/>
            <person name="Bao Q."/>
            <person name="Yu J."/>
            <person name="Chou Y.-Y."/>
            <person name="Wang H.-S."/>
            <person name="Lee Y.-S."/>
        </authorList>
    </citation>
    <scope>NUCLEOTIDE SEQUENCE [LARGE SCALE GENOMIC DNA]</scope>
    <source>
        <strain>SC-B67</strain>
    </source>
</reference>
<protein>
    <recommendedName>
        <fullName evidence="1">DNA repair protein RecO</fullName>
    </recommendedName>
    <alternativeName>
        <fullName evidence="1">Recombination protein O</fullName>
    </alternativeName>
</protein>
<sequence>MEGWQRAFVLHSRPWSETSLMLDVFTEESGRVRLVAKGARSKRSNLKGALQPFTPLLLRYSGRGEVKTLRSAEAVSLALPLSGITLYSGLYINELLSRVLEYETRFSELFFDYLNCIQALAGTTGSPEPALRRFELALLGHLGYGVNFTHCAGSGERVDDTMTYRYREEKGFFASVVIDNNTFTGRHLKALEAREFPDVDTLRAAKRFTRMALKPYLGGKPLKSRELFRQFMPKRTVKTKKD</sequence>
<proteinExistence type="inferred from homology"/>
<dbReference type="EMBL" id="AE017220">
    <property type="protein sequence ID" value="AAX66480.1"/>
    <property type="molecule type" value="Genomic_DNA"/>
</dbReference>
<dbReference type="RefSeq" id="WP_000399380.1">
    <property type="nucleotide sequence ID" value="NC_006905.1"/>
</dbReference>
<dbReference type="SMR" id="Q57LD2"/>
<dbReference type="KEGG" id="sec:SCH_2574"/>
<dbReference type="HOGENOM" id="CLU_066645_1_0_6"/>
<dbReference type="Proteomes" id="UP000000538">
    <property type="component" value="Chromosome"/>
</dbReference>
<dbReference type="GO" id="GO:0043590">
    <property type="term" value="C:bacterial nucleoid"/>
    <property type="evidence" value="ECO:0007669"/>
    <property type="project" value="TreeGrafter"/>
</dbReference>
<dbReference type="GO" id="GO:0006310">
    <property type="term" value="P:DNA recombination"/>
    <property type="evidence" value="ECO:0007669"/>
    <property type="project" value="UniProtKB-UniRule"/>
</dbReference>
<dbReference type="GO" id="GO:0006302">
    <property type="term" value="P:double-strand break repair"/>
    <property type="evidence" value="ECO:0007669"/>
    <property type="project" value="TreeGrafter"/>
</dbReference>
<dbReference type="FunFam" id="1.20.1440.120:FF:000001">
    <property type="entry name" value="DNA repair protein RecO"/>
    <property type="match status" value="1"/>
</dbReference>
<dbReference type="FunFam" id="2.40.50.140:FF:000074">
    <property type="entry name" value="DNA repair protein RecO"/>
    <property type="match status" value="1"/>
</dbReference>
<dbReference type="Gene3D" id="2.40.50.140">
    <property type="entry name" value="Nucleic acid-binding proteins"/>
    <property type="match status" value="1"/>
</dbReference>
<dbReference type="Gene3D" id="1.20.1440.120">
    <property type="entry name" value="Recombination protein O, C-terminal domain"/>
    <property type="match status" value="1"/>
</dbReference>
<dbReference type="HAMAP" id="MF_00201">
    <property type="entry name" value="RecO"/>
    <property type="match status" value="1"/>
</dbReference>
<dbReference type="InterPro" id="IPR037278">
    <property type="entry name" value="ARFGAP/RecO"/>
</dbReference>
<dbReference type="InterPro" id="IPR022572">
    <property type="entry name" value="DNA_rep/recomb_RecO_N"/>
</dbReference>
<dbReference type="InterPro" id="IPR012340">
    <property type="entry name" value="NA-bd_OB-fold"/>
</dbReference>
<dbReference type="InterPro" id="IPR003717">
    <property type="entry name" value="RecO"/>
</dbReference>
<dbReference type="InterPro" id="IPR042242">
    <property type="entry name" value="RecO_C"/>
</dbReference>
<dbReference type="NCBIfam" id="TIGR00613">
    <property type="entry name" value="reco"/>
    <property type="match status" value="1"/>
</dbReference>
<dbReference type="PANTHER" id="PTHR33991">
    <property type="entry name" value="DNA REPAIR PROTEIN RECO"/>
    <property type="match status" value="1"/>
</dbReference>
<dbReference type="PANTHER" id="PTHR33991:SF1">
    <property type="entry name" value="DNA REPAIR PROTEIN RECO"/>
    <property type="match status" value="1"/>
</dbReference>
<dbReference type="Pfam" id="PF02565">
    <property type="entry name" value="RecO_C"/>
    <property type="match status" value="1"/>
</dbReference>
<dbReference type="Pfam" id="PF11967">
    <property type="entry name" value="RecO_N"/>
    <property type="match status" value="1"/>
</dbReference>
<dbReference type="SUPFAM" id="SSF57863">
    <property type="entry name" value="ArfGap/RecO-like zinc finger"/>
    <property type="match status" value="1"/>
</dbReference>
<dbReference type="SUPFAM" id="SSF50249">
    <property type="entry name" value="Nucleic acid-binding proteins"/>
    <property type="match status" value="1"/>
</dbReference>